<name>RPC1_BP186</name>
<proteinExistence type="evidence at protein level"/>
<gene>
    <name type="primary">CI</name>
</gene>
<evidence type="ECO:0000305" key="1"/>
<evidence type="ECO:0007829" key="2">
    <source>
        <dbReference type="PDB" id="2FJR"/>
    </source>
</evidence>
<organismHost>
    <name type="scientific">Escherichia coli</name>
    <dbReference type="NCBI Taxonomy" id="562"/>
</organismHost>
<protein>
    <recommendedName>
        <fullName>Repressor protein CI</fullName>
    </recommendedName>
</protein>
<reference key="1">
    <citation type="journal article" date="1986" name="J. Mol. Biol.">
        <title>Control of gene expression in the P2-related template coliphages. III. DNA sequence of the major control region of phage 186.</title>
        <authorList>
            <person name="Kalionis B."/>
            <person name="Dodd I.B."/>
            <person name="Egan J.B."/>
        </authorList>
    </citation>
    <scope>NUCLEOTIDE SEQUENCE [GENOMIC DNA]</scope>
    <source>
        <strain>186CITSP</strain>
    </source>
</reference>
<reference key="2">
    <citation type="journal article" date="1990" name="J. Mol. Biol.">
        <title>Control of gene expression in the temperate coliphage 186. VIII. Control of lysis and lysogeny by a transcriptional switch involving face-to-face promoters.</title>
        <authorList>
            <person name="Dodd I.B."/>
            <person name="Kalionis B."/>
            <person name="Egan J.B."/>
        </authorList>
    </citation>
    <scope>SEQUENCE REVISION TO 22</scope>
</reference>
<accession>P08707</accession>
<feature type="chain" id="PRO_0000165292" description="Repressor protein CI">
    <location>
        <begin position="1"/>
        <end position="192"/>
    </location>
</feature>
<feature type="helix" evidence="2">
    <location>
        <begin position="10"/>
        <end position="21"/>
    </location>
</feature>
<feature type="helix" evidence="2">
    <location>
        <begin position="26"/>
        <end position="32"/>
    </location>
</feature>
<feature type="helix" evidence="2">
    <location>
        <begin position="37"/>
        <end position="45"/>
    </location>
</feature>
<feature type="strand" evidence="2">
    <location>
        <begin position="46"/>
        <end position="48"/>
    </location>
</feature>
<feature type="helix" evidence="2">
    <location>
        <begin position="51"/>
        <end position="61"/>
    </location>
</feature>
<feature type="helix" evidence="2">
    <location>
        <begin position="65"/>
        <end position="70"/>
    </location>
</feature>
<feature type="strand" evidence="2">
    <location>
        <begin position="86"/>
        <end position="94"/>
    </location>
</feature>
<feature type="strand" evidence="2">
    <location>
        <begin position="97"/>
        <end position="106"/>
    </location>
</feature>
<feature type="helix" evidence="2">
    <location>
        <begin position="108"/>
        <end position="110"/>
    </location>
</feature>
<feature type="strand" evidence="2">
    <location>
        <begin position="116"/>
        <end position="123"/>
    </location>
</feature>
<feature type="strand" evidence="2">
    <location>
        <begin position="126"/>
        <end position="131"/>
    </location>
</feature>
<feature type="strand" evidence="2">
    <location>
        <begin position="138"/>
        <end position="145"/>
    </location>
</feature>
<feature type="strand" evidence="2">
    <location>
        <begin position="148"/>
        <end position="157"/>
    </location>
</feature>
<feature type="turn" evidence="2">
    <location>
        <begin position="158"/>
        <end position="160"/>
    </location>
</feature>
<feature type="strand" evidence="2">
    <location>
        <begin position="161"/>
        <end position="169"/>
    </location>
</feature>
<feature type="strand" evidence="2">
    <location>
        <begin position="171"/>
        <end position="174"/>
    </location>
</feature>
<feature type="strand" evidence="2">
    <location>
        <begin position="177"/>
        <end position="190"/>
    </location>
</feature>
<sequence length="192" mass="21157">MRIDSLGWSNVDVLDRICEAYGFSQKIQLANHFDIASSSLSNRYTRGAISYDFAAHCALETGANLQWLLTGEGEAFVNNRESSDAKRIEGFTLSEEILKSDKQLSVDAQFFTKPLTDGMAIRSEGKIYFVDKQASLSDGLWLVDIEGAISIRELTKLPGRKLHVAGGKVPFECGIDDIKTLGRVVGVYSEVN</sequence>
<organism>
    <name type="scientific">Escherichia phage 186</name>
    <name type="common">Bacteriophage 186</name>
    <dbReference type="NCBI Taxonomy" id="29252"/>
    <lineage>
        <taxon>Viruses</taxon>
        <taxon>Duplodnaviria</taxon>
        <taxon>Heunggongvirae</taxon>
        <taxon>Uroviricota</taxon>
        <taxon>Caudoviricetes</taxon>
        <taxon>Peduoviridae</taxon>
        <taxon>Eganvirus</taxon>
    </lineage>
</organism>
<keyword id="KW-0002">3D-structure</keyword>
<keyword id="KW-0238">DNA-binding</keyword>
<keyword id="KW-1185">Reference proteome</keyword>
<keyword id="KW-0678">Repressor</keyword>
<keyword id="KW-0804">Transcription</keyword>
<keyword id="KW-0805">Transcription regulation</keyword>
<dbReference type="EMBL" id="U32222">
    <property type="protein sequence ID" value="AAC34176.1"/>
    <property type="molecule type" value="Genomic_DNA"/>
</dbReference>
<dbReference type="PIR" id="S09533">
    <property type="entry name" value="S09533"/>
</dbReference>
<dbReference type="RefSeq" id="NP_052279.1">
    <property type="nucleotide sequence ID" value="NC_001317.1"/>
</dbReference>
<dbReference type="PDB" id="2FJR">
    <property type="method" value="X-ray"/>
    <property type="resolution" value="1.95 A"/>
    <property type="chains" value="A/B=4-192"/>
</dbReference>
<dbReference type="PDB" id="2FKD">
    <property type="method" value="X-ray"/>
    <property type="resolution" value="2.70 A"/>
    <property type="chains" value="A/B/C/D/E/F/G/H/I/J/K/L/M/N=83-192"/>
</dbReference>
<dbReference type="PDB" id="7JVT">
    <property type="method" value="X-ray"/>
    <property type="resolution" value="3.16 A"/>
    <property type="chains" value="C/D=84-192"/>
</dbReference>
<dbReference type="PDBsum" id="2FJR"/>
<dbReference type="PDBsum" id="2FKD"/>
<dbReference type="PDBsum" id="7JVT"/>
<dbReference type="SMR" id="P08707"/>
<dbReference type="GeneID" id="1262440"/>
<dbReference type="KEGG" id="vg:1262440"/>
<dbReference type="OrthoDB" id="27010at10239"/>
<dbReference type="EvolutionaryTrace" id="P08707"/>
<dbReference type="Proteomes" id="UP000000369">
    <property type="component" value="Segment"/>
</dbReference>
<dbReference type="GO" id="GO:0003677">
    <property type="term" value="F:DNA binding"/>
    <property type="evidence" value="ECO:0007669"/>
    <property type="project" value="UniProtKB-KW"/>
</dbReference>
<dbReference type="GO" id="GO:0045892">
    <property type="term" value="P:negative regulation of DNA-templated transcription"/>
    <property type="evidence" value="ECO:0007669"/>
    <property type="project" value="InterPro"/>
</dbReference>
<dbReference type="GO" id="GO:0051259">
    <property type="term" value="P:protein complex oligomerization"/>
    <property type="evidence" value="ECO:0007669"/>
    <property type="project" value="InterPro"/>
</dbReference>
<dbReference type="Gene3D" id="1.10.260.40">
    <property type="entry name" value="lambda repressor-like DNA-binding domains"/>
    <property type="match status" value="1"/>
</dbReference>
<dbReference type="Gene3D" id="2.10.109.10">
    <property type="entry name" value="Umud Fragment, subunit A"/>
    <property type="match status" value="1"/>
</dbReference>
<dbReference type="InterPro" id="IPR010982">
    <property type="entry name" value="Lambda_DNA-bd_dom_sf"/>
</dbReference>
<dbReference type="InterPro" id="IPR032499">
    <property type="entry name" value="Phage_CI_C"/>
</dbReference>
<dbReference type="InterPro" id="IPR010744">
    <property type="entry name" value="Phage_CI_N"/>
</dbReference>
<dbReference type="Pfam" id="PF16452">
    <property type="entry name" value="Phage_CI_C"/>
    <property type="match status" value="1"/>
</dbReference>
<dbReference type="Pfam" id="PF07022">
    <property type="entry name" value="Phage_CI_repr"/>
    <property type="match status" value="1"/>
</dbReference>
<comment type="function">
    <text>Repressor of lysogeny.</text>
</comment>
<comment type="similarity">
    <text evidence="1">Belongs to the CI repressor protein family.</text>
</comment>